<gene>
    <name type="ordered locus">aq_2203</name>
</gene>
<dbReference type="EMBL" id="AE000657">
    <property type="protein sequence ID" value="AAC07907.1"/>
    <property type="molecule type" value="Genomic_DNA"/>
</dbReference>
<dbReference type="PIR" id="D70489">
    <property type="entry name" value="D70489"/>
</dbReference>
<dbReference type="RefSeq" id="NP_214513.1">
    <property type="nucleotide sequence ID" value="NC_000918.1"/>
</dbReference>
<dbReference type="RefSeq" id="WP_010881449.1">
    <property type="nucleotide sequence ID" value="NC_000918.1"/>
</dbReference>
<dbReference type="SMR" id="O67944"/>
<dbReference type="STRING" id="224324.aq_2203"/>
<dbReference type="EnsemblBacteria" id="AAC07907">
    <property type="protein sequence ID" value="AAC07907"/>
    <property type="gene ID" value="aq_2203"/>
</dbReference>
<dbReference type="KEGG" id="aae:aq_2203"/>
<dbReference type="eggNOG" id="COG1381">
    <property type="taxonomic scope" value="Bacteria"/>
</dbReference>
<dbReference type="HOGENOM" id="CLU_1414577_0_0_0"/>
<dbReference type="InParanoid" id="O67944"/>
<dbReference type="OrthoDB" id="13347at2"/>
<dbReference type="Proteomes" id="UP000000798">
    <property type="component" value="Chromosome"/>
</dbReference>
<dbReference type="GO" id="GO:0043590">
    <property type="term" value="C:bacterial nucleoid"/>
    <property type="evidence" value="ECO:0000318"/>
    <property type="project" value="GO_Central"/>
</dbReference>
<dbReference type="GO" id="GO:0006310">
    <property type="term" value="P:DNA recombination"/>
    <property type="evidence" value="ECO:0007669"/>
    <property type="project" value="InterPro"/>
</dbReference>
<dbReference type="GO" id="GO:0006302">
    <property type="term" value="P:double-strand break repair"/>
    <property type="evidence" value="ECO:0000318"/>
    <property type="project" value="GO_Central"/>
</dbReference>
<dbReference type="Gene3D" id="2.40.50.140">
    <property type="entry name" value="Nucleic acid-binding proteins"/>
    <property type="match status" value="1"/>
</dbReference>
<dbReference type="InterPro" id="IPR012340">
    <property type="entry name" value="NA-bd_OB-fold"/>
</dbReference>
<dbReference type="InterPro" id="IPR003717">
    <property type="entry name" value="RecO"/>
</dbReference>
<dbReference type="PANTHER" id="PTHR33991">
    <property type="entry name" value="DNA REPAIR PROTEIN RECO"/>
    <property type="match status" value="1"/>
</dbReference>
<dbReference type="PANTHER" id="PTHR33991:SF1">
    <property type="entry name" value="DNA REPAIR PROTEIN RECO"/>
    <property type="match status" value="1"/>
</dbReference>
<dbReference type="Pfam" id="PF02565">
    <property type="entry name" value="RecO_C"/>
    <property type="match status" value="1"/>
</dbReference>
<sequence>MKGTFLVLRRVRGGDVDLVATLYGTAGKVSLFLREGYLNEKKLFGVFEPFNLVKIDYYQSSGLIIPRDVLEVKRFSYFAKDVKRYFLMSYISQTVLRHINFYDEELFSLILRFFLKETKNPEASYFKFFLNLLKTLGYEPLFLRERVRGRYAFLDLEKGSLSSSGVKVRSSLLNLLKKIHQLEEYERIKIKRKDFEEGREILEKFLSFHLNR</sequence>
<proteinExistence type="predicted"/>
<reference key="1">
    <citation type="journal article" date="1998" name="Nature">
        <title>The complete genome of the hyperthermophilic bacterium Aquifex aeolicus.</title>
        <authorList>
            <person name="Deckert G."/>
            <person name="Warren P.V."/>
            <person name="Gaasterland T."/>
            <person name="Young W.G."/>
            <person name="Lenox A.L."/>
            <person name="Graham D.E."/>
            <person name="Overbeek R."/>
            <person name="Snead M.A."/>
            <person name="Keller M."/>
            <person name="Aujay M."/>
            <person name="Huber R."/>
            <person name="Feldman R.A."/>
            <person name="Short J.M."/>
            <person name="Olsen G.J."/>
            <person name="Swanson R.V."/>
        </authorList>
    </citation>
    <scope>NUCLEOTIDE SEQUENCE [LARGE SCALE GENOMIC DNA]</scope>
    <source>
        <strain>VF5</strain>
    </source>
</reference>
<protein>
    <recommendedName>
        <fullName>Uncharacterized protein aq_2203</fullName>
    </recommendedName>
</protein>
<keyword id="KW-1185">Reference proteome</keyword>
<organism>
    <name type="scientific">Aquifex aeolicus (strain VF5)</name>
    <dbReference type="NCBI Taxonomy" id="224324"/>
    <lineage>
        <taxon>Bacteria</taxon>
        <taxon>Pseudomonadati</taxon>
        <taxon>Aquificota</taxon>
        <taxon>Aquificia</taxon>
        <taxon>Aquificales</taxon>
        <taxon>Aquificaceae</taxon>
        <taxon>Aquifex</taxon>
    </lineage>
</organism>
<name>Y2203_AQUAE</name>
<feature type="chain" id="PRO_0000186978" description="Uncharacterized protein aq_2203">
    <location>
        <begin position="1"/>
        <end position="212"/>
    </location>
</feature>
<accession>O67944</accession>